<sequence length="384" mass="41848">MVEDKKTDDYTIEMDKMDQGSKNFEAAAPPPQPRTPPAGSISNNPILPVLAYCGSSILMTVMNKYVLSGLDFNLNFFLLCVQSIVCIVAIQTCKSCGLITYRDFSADEARKWFPITLLLIGMIYTGSKALQFLSIPVYTIFKNLTIILIAYGEVLWFGGSVTGLTLFSFGLMVLSSIIAAWADIKHAVESTGDATAKVSTLNAGYIWMLVNCLCTSSYVLGMRKRIKLTNFKDFDTLAMFYNNLLSIPVLIVLTGLMEDWSSANITRNFPPADRNNIIFAMILSGLSSVFISYTSAWCVRVTSSTTYSMVGALNKLPIALSGLIFFDAPVTFPSVSAIVVGFVSGIVYAVAKIKQNAKPKTGVLPMSNPPVSASSQSMRDSLRS</sequence>
<organism>
    <name type="scientific">Aspergillus terreus (strain NIH 2624 / FGSC A1156)</name>
    <dbReference type="NCBI Taxonomy" id="341663"/>
    <lineage>
        <taxon>Eukaryota</taxon>
        <taxon>Fungi</taxon>
        <taxon>Dikarya</taxon>
        <taxon>Ascomycota</taxon>
        <taxon>Pezizomycotina</taxon>
        <taxon>Eurotiomycetes</taxon>
        <taxon>Eurotiomycetidae</taxon>
        <taxon>Eurotiales</taxon>
        <taxon>Aspergillaceae</taxon>
        <taxon>Aspergillus</taxon>
        <taxon>Aspergillus subgen. Circumdati</taxon>
    </lineage>
</organism>
<dbReference type="EMBL" id="CH476607">
    <property type="protein sequence ID" value="EAU30594.1"/>
    <property type="molecule type" value="Genomic_DNA"/>
</dbReference>
<dbReference type="RefSeq" id="XP_001218079.1">
    <property type="nucleotide sequence ID" value="XM_001218078.1"/>
</dbReference>
<dbReference type="SMR" id="Q0CA27"/>
<dbReference type="STRING" id="341663.Q0CA27"/>
<dbReference type="GlyCosmos" id="Q0CA27">
    <property type="glycosylation" value="1 site, No reported glycans"/>
</dbReference>
<dbReference type="EnsemblFungi" id="EAU30594">
    <property type="protein sequence ID" value="EAU30594"/>
    <property type="gene ID" value="ATEG_09457"/>
</dbReference>
<dbReference type="GeneID" id="4353765"/>
<dbReference type="VEuPathDB" id="FungiDB:ATEG_09457"/>
<dbReference type="eggNOG" id="KOG1444">
    <property type="taxonomic scope" value="Eukaryota"/>
</dbReference>
<dbReference type="HOGENOM" id="CLU_025360_1_2_1"/>
<dbReference type="OMA" id="VWMLINC"/>
<dbReference type="OrthoDB" id="417037at2759"/>
<dbReference type="Proteomes" id="UP000007963">
    <property type="component" value="Unassembled WGS sequence"/>
</dbReference>
<dbReference type="GO" id="GO:0030659">
    <property type="term" value="C:cytoplasmic vesicle membrane"/>
    <property type="evidence" value="ECO:0007669"/>
    <property type="project" value="UniProtKB-SubCell"/>
</dbReference>
<dbReference type="GO" id="GO:0005789">
    <property type="term" value="C:endoplasmic reticulum membrane"/>
    <property type="evidence" value="ECO:0007669"/>
    <property type="project" value="UniProtKB-SubCell"/>
</dbReference>
<dbReference type="GO" id="GO:0000139">
    <property type="term" value="C:Golgi membrane"/>
    <property type="evidence" value="ECO:0007669"/>
    <property type="project" value="UniProtKB-SubCell"/>
</dbReference>
<dbReference type="GO" id="GO:0005458">
    <property type="term" value="F:GDP-mannose transmembrane transporter activity"/>
    <property type="evidence" value="ECO:0007669"/>
    <property type="project" value="EnsemblFungi"/>
</dbReference>
<dbReference type="InterPro" id="IPR013657">
    <property type="entry name" value="SCL35B1-4/HUT1"/>
</dbReference>
<dbReference type="InterPro" id="IPR050186">
    <property type="entry name" value="TPT_transporter"/>
</dbReference>
<dbReference type="NCBIfam" id="TIGR00803">
    <property type="entry name" value="nst"/>
    <property type="match status" value="1"/>
</dbReference>
<dbReference type="PANTHER" id="PTHR11132">
    <property type="entry name" value="SOLUTE CARRIER FAMILY 35"/>
    <property type="match status" value="1"/>
</dbReference>
<dbReference type="Pfam" id="PF08449">
    <property type="entry name" value="UAA"/>
    <property type="match status" value="1"/>
</dbReference>
<dbReference type="SUPFAM" id="SSF103481">
    <property type="entry name" value="Multidrug resistance efflux transporter EmrE"/>
    <property type="match status" value="1"/>
</dbReference>
<gene>
    <name type="primary">gmt1</name>
    <name type="synonym">vrg4</name>
    <name type="ORF">ATEG_09457</name>
</gene>
<keyword id="KW-0968">Cytoplasmic vesicle</keyword>
<keyword id="KW-0256">Endoplasmic reticulum</keyword>
<keyword id="KW-0325">Glycoprotein</keyword>
<keyword id="KW-0333">Golgi apparatus</keyword>
<keyword id="KW-0472">Membrane</keyword>
<keyword id="KW-1185">Reference proteome</keyword>
<keyword id="KW-0762">Sugar transport</keyword>
<keyword id="KW-0812">Transmembrane</keyword>
<keyword id="KW-1133">Transmembrane helix</keyword>
<keyword id="KW-0813">Transport</keyword>
<evidence type="ECO:0000250" key="1"/>
<evidence type="ECO:0000255" key="2"/>
<evidence type="ECO:0000256" key="3">
    <source>
        <dbReference type="SAM" id="MobiDB-lite"/>
    </source>
</evidence>
<evidence type="ECO:0000305" key="4"/>
<name>GMT_ASPTN</name>
<comment type="function">
    <text evidence="1">Involved in the import of GDP-mannose from the cytoplasm into the Golgi lumen.</text>
</comment>
<comment type="subunit">
    <text evidence="1">Homooligomer.</text>
</comment>
<comment type="subcellular location">
    <subcellularLocation>
        <location evidence="1">Golgi apparatus membrane</location>
        <topology evidence="1">Multi-pass membrane protein</topology>
    </subcellularLocation>
    <subcellularLocation>
        <location evidence="1">Cytoplasmic vesicle membrane</location>
        <topology evidence="1">Multi-pass membrane protein</topology>
    </subcellularLocation>
    <subcellularLocation>
        <location evidence="1">Endoplasmic reticulum membrane</location>
        <topology evidence="1">Multi-pass membrane protein</topology>
    </subcellularLocation>
</comment>
<comment type="similarity">
    <text evidence="4">Belongs to the TPT transporter family. SLC35D subfamily.</text>
</comment>
<protein>
    <recommendedName>
        <fullName>GDP-mannose transporter</fullName>
        <shortName>GMT</shortName>
    </recommendedName>
</protein>
<proteinExistence type="inferred from homology"/>
<accession>Q0CA27</accession>
<feature type="chain" id="PRO_0000333513" description="GDP-mannose transporter">
    <location>
        <begin position="1"/>
        <end position="384"/>
    </location>
</feature>
<feature type="topological domain" description="Cytoplasmic" evidence="1">
    <location>
        <begin position="1"/>
        <end position="40"/>
    </location>
</feature>
<feature type="transmembrane region" description="Helical" evidence="2">
    <location>
        <begin position="41"/>
        <end position="61"/>
    </location>
</feature>
<feature type="topological domain" description="Lumenal" evidence="1">
    <location>
        <begin position="62"/>
        <end position="69"/>
    </location>
</feature>
<feature type="transmembrane region" description="Helical" evidence="2">
    <location>
        <begin position="70"/>
        <end position="90"/>
    </location>
</feature>
<feature type="topological domain" description="Cytoplasmic" evidence="1">
    <location>
        <begin position="91"/>
        <end position="110"/>
    </location>
</feature>
<feature type="transmembrane region" description="Helical" evidence="2">
    <location>
        <begin position="111"/>
        <end position="127"/>
    </location>
</feature>
<feature type="topological domain" description="Lumenal" evidence="1">
    <location>
        <begin position="128"/>
        <end position="134"/>
    </location>
</feature>
<feature type="transmembrane region" description="Helical" evidence="2">
    <location>
        <begin position="135"/>
        <end position="151"/>
    </location>
</feature>
<feature type="topological domain" description="Cytoplasmic" evidence="1">
    <location>
        <begin position="152"/>
        <end position="160"/>
    </location>
</feature>
<feature type="transmembrane region" description="Helical" evidence="2">
    <location>
        <begin position="161"/>
        <end position="182"/>
    </location>
</feature>
<feature type="topological domain" description="Lumenal" evidence="1">
    <location>
        <begin position="183"/>
        <end position="200"/>
    </location>
</feature>
<feature type="transmembrane region" description="Helical" evidence="2">
    <location>
        <begin position="201"/>
        <end position="221"/>
    </location>
</feature>
<feature type="topological domain" description="Cytoplasmic" evidence="1">
    <location>
        <begin position="222"/>
        <end position="236"/>
    </location>
</feature>
<feature type="transmembrane region" description="Helical" evidence="2">
    <location>
        <begin position="237"/>
        <end position="257"/>
    </location>
</feature>
<feature type="topological domain" description="Lumenal" evidence="1">
    <location>
        <begin position="258"/>
        <end position="276"/>
    </location>
</feature>
<feature type="transmembrane region" description="Helical" evidence="2">
    <location>
        <begin position="277"/>
        <end position="297"/>
    </location>
</feature>
<feature type="topological domain" description="Cytoplasmic" evidence="1">
    <location>
        <begin position="298"/>
        <end position="305"/>
    </location>
</feature>
<feature type="transmembrane region" description="Helical" evidence="2">
    <location>
        <begin position="306"/>
        <end position="326"/>
    </location>
</feature>
<feature type="topological domain" description="Lumenal" evidence="1">
    <location>
        <begin position="327"/>
        <end position="329"/>
    </location>
</feature>
<feature type="transmembrane region" description="Helical" evidence="2">
    <location>
        <begin position="330"/>
        <end position="350"/>
    </location>
</feature>
<feature type="topological domain" description="Cytoplasmic" evidence="1">
    <location>
        <begin position="351"/>
        <end position="384"/>
    </location>
</feature>
<feature type="region of interest" description="Disordered" evidence="3">
    <location>
        <begin position="364"/>
        <end position="384"/>
    </location>
</feature>
<feature type="compositionally biased region" description="Polar residues" evidence="3">
    <location>
        <begin position="369"/>
        <end position="384"/>
    </location>
</feature>
<feature type="glycosylation site" description="N-linked (GlcNAc...) asparagine" evidence="2">
    <location>
        <position position="264"/>
    </location>
</feature>
<reference key="1">
    <citation type="submission" date="2005-09" db="EMBL/GenBank/DDBJ databases">
        <title>Annotation of the Aspergillus terreus NIH2624 genome.</title>
        <authorList>
            <person name="Birren B.W."/>
            <person name="Lander E.S."/>
            <person name="Galagan J.E."/>
            <person name="Nusbaum C."/>
            <person name="Devon K."/>
            <person name="Henn M."/>
            <person name="Ma L.-J."/>
            <person name="Jaffe D.B."/>
            <person name="Butler J."/>
            <person name="Alvarez P."/>
            <person name="Gnerre S."/>
            <person name="Grabherr M."/>
            <person name="Kleber M."/>
            <person name="Mauceli E.W."/>
            <person name="Brockman W."/>
            <person name="Rounsley S."/>
            <person name="Young S.K."/>
            <person name="LaButti K."/>
            <person name="Pushparaj V."/>
            <person name="DeCaprio D."/>
            <person name="Crawford M."/>
            <person name="Koehrsen M."/>
            <person name="Engels R."/>
            <person name="Montgomery P."/>
            <person name="Pearson M."/>
            <person name="Howarth C."/>
            <person name="Larson L."/>
            <person name="Luoma S."/>
            <person name="White J."/>
            <person name="Alvarado L."/>
            <person name="Kodira C.D."/>
            <person name="Zeng Q."/>
            <person name="Oleary S."/>
            <person name="Yandava C."/>
            <person name="Denning D.W."/>
            <person name="Nierman W.C."/>
            <person name="Milne T."/>
            <person name="Madden K."/>
        </authorList>
    </citation>
    <scope>NUCLEOTIDE SEQUENCE [LARGE SCALE GENOMIC DNA]</scope>
    <source>
        <strain>NIH 2624 / FGSC A1156</strain>
    </source>
</reference>